<organism>
    <name type="scientific">Vibrio cholerae serotype O1 (strain ATCC 39315 / El Tor Inaba N16961)</name>
    <dbReference type="NCBI Taxonomy" id="243277"/>
    <lineage>
        <taxon>Bacteria</taxon>
        <taxon>Pseudomonadati</taxon>
        <taxon>Pseudomonadota</taxon>
        <taxon>Gammaproteobacteria</taxon>
        <taxon>Vibrionales</taxon>
        <taxon>Vibrionaceae</taxon>
        <taxon>Vibrio</taxon>
    </lineage>
</organism>
<gene>
    <name evidence="6" type="primary">cgtA</name>
    <name type="synonym">obg</name>
    <name type="ordered locus">VC_0437</name>
</gene>
<feature type="chain" id="PRO_0000386377" description="GTPase Obg/CgtA">
    <location>
        <begin position="1"/>
        <end position="390"/>
    </location>
</feature>
<feature type="domain" description="Obg" evidence="2">
    <location>
        <begin position="1"/>
        <end position="159"/>
    </location>
</feature>
<feature type="domain" description="OBG-type G" evidence="1">
    <location>
        <begin position="160"/>
        <end position="333"/>
    </location>
</feature>
<feature type="binding site" evidence="1">
    <location>
        <begin position="166"/>
        <end position="173"/>
    </location>
    <ligand>
        <name>GTP</name>
        <dbReference type="ChEBI" id="CHEBI:37565"/>
    </ligand>
</feature>
<feature type="binding site" evidence="1">
    <location>
        <position position="173"/>
    </location>
    <ligand>
        <name>Mg(2+)</name>
        <dbReference type="ChEBI" id="CHEBI:18420"/>
    </ligand>
</feature>
<feature type="binding site" evidence="1">
    <location>
        <begin position="191"/>
        <end position="195"/>
    </location>
    <ligand>
        <name>GTP</name>
        <dbReference type="ChEBI" id="CHEBI:37565"/>
    </ligand>
</feature>
<feature type="binding site" evidence="1">
    <location>
        <position position="193"/>
    </location>
    <ligand>
        <name>Mg(2+)</name>
        <dbReference type="ChEBI" id="CHEBI:18420"/>
    </ligand>
</feature>
<feature type="binding site" evidence="1">
    <location>
        <begin position="213"/>
        <end position="216"/>
    </location>
    <ligand>
        <name>GTP</name>
        <dbReference type="ChEBI" id="CHEBI:37565"/>
    </ligand>
</feature>
<feature type="binding site" evidence="1">
    <location>
        <begin position="283"/>
        <end position="286"/>
    </location>
    <ligand>
        <name>GTP</name>
        <dbReference type="ChEBI" id="CHEBI:37565"/>
    </ligand>
</feature>
<feature type="binding site" evidence="1">
    <location>
        <begin position="314"/>
        <end position="316"/>
    </location>
    <ligand>
        <name>GTP</name>
        <dbReference type="ChEBI" id="CHEBI:37565"/>
    </ligand>
</feature>
<feature type="mutagenesis site" description="Decreased intrinsic GTPase, not stimulated by 50S ribosomal subunit. Wild-type GTPase is restored; when associated with G-194." evidence="5">
    <original>G</original>
    <variation>A</variation>
    <location>
        <position position="93"/>
    </location>
</feature>
<feature type="mutagenesis site" description="Increased intrinsic GTPase, still stimulated by 50S ribosomal subunit. Wild-type GTPase is restored; when associated with A-98." evidence="5">
    <original>Y</original>
    <variation>G</variation>
    <location>
        <position position="189"/>
    </location>
</feature>
<evidence type="ECO:0000255" key="1">
    <source>
        <dbReference type="HAMAP-Rule" id="MF_01454"/>
    </source>
</evidence>
<evidence type="ECO:0000255" key="2">
    <source>
        <dbReference type="PROSITE-ProRule" id="PRU01231"/>
    </source>
</evidence>
<evidence type="ECO:0000269" key="3">
    <source>
    </source>
</evidence>
<evidence type="ECO:0000269" key="4">
    <source>
    </source>
</evidence>
<evidence type="ECO:0000269" key="5">
    <source>
    </source>
</evidence>
<evidence type="ECO:0000303" key="6">
    <source>
    </source>
</evidence>
<evidence type="ECO:0000305" key="7"/>
<protein>
    <recommendedName>
        <fullName evidence="1">GTPase Obg/CgtA</fullName>
        <ecNumber evidence="1 5">3.6.5.-</ecNumber>
    </recommendedName>
    <alternativeName>
        <fullName evidence="6">CgtA</fullName>
    </alternativeName>
    <alternativeName>
        <fullName evidence="1">GTP-binding protein Obg</fullName>
    </alternativeName>
</protein>
<sequence length="390" mass="43046">MKFVDEAVIKVQAGDGGNGVVSFWREKFVTNGGPDGGDGGDGGDVYMVADENLNTLIDYRFQRFYEAERGKNGGGGNCTGKSGKDKELRVPVGTRAVDIHTNEIIGEVAEHGKKVMIAKGGWHGLGNARFKSSVNRSPRQKTLGTKGELRDIRLELLLLADVGMLGMPNAGKSTFIRAVSAAKPKVADYPFTTLVPSLGVVSVLPEKSFVVADIPGLIEGAAEGAGLGIRFLKHLERCRVLLHMIDIMPADQSDPAHNALTIIDELEQYSEKLAKKPRWLVFNKVDLMSEEEADEIIQNIIDALAWEGDYFKISAANRQGTKELCMKLAEFMDTLPREAEEKTEAEKVDFTWDYNHKDGLAGREVITEDDDDWDDWDDEEDDGHVIYVRD</sequence>
<keyword id="KW-0963">Cytoplasm</keyword>
<keyword id="KW-0342">GTP-binding</keyword>
<keyword id="KW-0378">Hydrolase</keyword>
<keyword id="KW-0460">Magnesium</keyword>
<keyword id="KW-0479">Metal-binding</keyword>
<keyword id="KW-0547">Nucleotide-binding</keyword>
<keyword id="KW-1185">Reference proteome</keyword>
<accession>Q9KUS8</accession>
<proteinExistence type="evidence at protein level"/>
<comment type="function">
    <text evidence="3 4">Depletion experiments lead to gene down regulation and a dramatic increase in ppGpp levels, like those seen in the stringent response (PubMed:17360576). There is no change in cell morphology in depletion experiments (PubMed:17360576, PubMed:18456812), but cells are very sensitive to the DNA-damaging agent hydroxyurea and are very elongated. Overexpression reduces growth and leads to elongated cells. Overexpression of proteins with C-terminal deletions of 29 or 62 amino acids showed fewer elongated cells (PubMed:18456812).</text>
</comment>
<comment type="function">
    <text evidence="1 5">An essential GTPase which binds GTP, GDP and possibly (p)ppGpp with moderate affinity, with high nucleotide exchange rates and a fairly low GTP hydrolysis rate. It may play a role in control of the cell cycle, stress response, ribosome biogenesis and in those bacteria that undergo differentiation, in morphogenesis control (By similarity). GTPase activity is stimulated by 50S ribosomal subunits (PubMed:25912137).</text>
</comment>
<comment type="cofactor">
    <cofactor evidence="1">
        <name>Mg(2+)</name>
        <dbReference type="ChEBI" id="CHEBI:18420"/>
    </cofactor>
</comment>
<comment type="subunit">
    <text evidence="1 3">Monomer (By similarity). Interacts with SpoT (AC Q9KNM2) in a yeast 2-hybrid assay.</text>
</comment>
<comment type="subcellular location">
    <subcellularLocation>
        <location evidence="1">Cytoplasm</location>
    </subcellularLocation>
</comment>
<comment type="disruption phenotype">
    <text evidence="3 4">Essential for growth, it cannot be disrupted. One group found this gene can be disrupted in a relA deletion strain (PubMed:17360576). Another group has found that it cannot be disrupted in a relA deletion strain, in agreement with data from E.coli (PubMed:18456812) (RelA phosphorylates GTP to ppGpp).</text>
</comment>
<comment type="similarity">
    <text evidence="1">Belongs to the TRAFAC class OBG-HflX-like GTPase superfamily. OBG GTPase family.</text>
</comment>
<comment type="sequence caution" evidence="7">
    <conflict type="erroneous initiation">
        <sequence resource="EMBL-CDS" id="AAF93610"/>
    </conflict>
    <text>Extended N-terminus.</text>
</comment>
<dbReference type="EC" id="3.6.5.-" evidence="1 5"/>
<dbReference type="EMBL" id="AE003852">
    <property type="protein sequence ID" value="AAF93610.1"/>
    <property type="status" value="ALT_INIT"/>
    <property type="molecule type" value="Genomic_DNA"/>
</dbReference>
<dbReference type="PIR" id="D82322">
    <property type="entry name" value="D82322"/>
</dbReference>
<dbReference type="RefSeq" id="NP_230091.2">
    <property type="nucleotide sequence ID" value="NC_002505.1"/>
</dbReference>
<dbReference type="RefSeq" id="WP_000673586.1">
    <property type="nucleotide sequence ID" value="NZ_LT906614.1"/>
</dbReference>
<dbReference type="SMR" id="Q9KUS8"/>
<dbReference type="DIP" id="DIP-60891N"/>
<dbReference type="IntAct" id="Q9KUS8">
    <property type="interactions" value="1"/>
</dbReference>
<dbReference type="STRING" id="243277.VC_0437"/>
<dbReference type="DNASU" id="2615698"/>
<dbReference type="EnsemblBacteria" id="AAF93610">
    <property type="protein sequence ID" value="AAF93610"/>
    <property type="gene ID" value="VC_0437"/>
</dbReference>
<dbReference type="KEGG" id="vch:VC_0437"/>
<dbReference type="PATRIC" id="fig|243277.26.peg.411"/>
<dbReference type="eggNOG" id="COG0536">
    <property type="taxonomic scope" value="Bacteria"/>
</dbReference>
<dbReference type="HOGENOM" id="CLU_011747_2_0_6"/>
<dbReference type="Proteomes" id="UP000000584">
    <property type="component" value="Chromosome 1"/>
</dbReference>
<dbReference type="GO" id="GO:0005737">
    <property type="term" value="C:cytoplasm"/>
    <property type="evidence" value="ECO:0007669"/>
    <property type="project" value="UniProtKB-SubCell"/>
</dbReference>
<dbReference type="GO" id="GO:0005525">
    <property type="term" value="F:GTP binding"/>
    <property type="evidence" value="ECO:0000318"/>
    <property type="project" value="GO_Central"/>
</dbReference>
<dbReference type="GO" id="GO:0003924">
    <property type="term" value="F:GTPase activity"/>
    <property type="evidence" value="ECO:0000318"/>
    <property type="project" value="GO_Central"/>
</dbReference>
<dbReference type="GO" id="GO:0000287">
    <property type="term" value="F:magnesium ion binding"/>
    <property type="evidence" value="ECO:0007669"/>
    <property type="project" value="InterPro"/>
</dbReference>
<dbReference type="GO" id="GO:0042254">
    <property type="term" value="P:ribosome biogenesis"/>
    <property type="evidence" value="ECO:0007669"/>
    <property type="project" value="UniProtKB-UniRule"/>
</dbReference>
<dbReference type="CDD" id="cd01898">
    <property type="entry name" value="Obg"/>
    <property type="match status" value="1"/>
</dbReference>
<dbReference type="FunFam" id="2.70.210.12:FF:000001">
    <property type="entry name" value="GTPase Obg"/>
    <property type="match status" value="1"/>
</dbReference>
<dbReference type="FunFam" id="3.40.50.300:FF:000185">
    <property type="entry name" value="GTPase Obg"/>
    <property type="match status" value="1"/>
</dbReference>
<dbReference type="Gene3D" id="2.70.210.12">
    <property type="entry name" value="GTP1/OBG domain"/>
    <property type="match status" value="1"/>
</dbReference>
<dbReference type="Gene3D" id="3.40.50.300">
    <property type="entry name" value="P-loop containing nucleotide triphosphate hydrolases"/>
    <property type="match status" value="1"/>
</dbReference>
<dbReference type="HAMAP" id="MF_01454">
    <property type="entry name" value="GTPase_Obg"/>
    <property type="match status" value="1"/>
</dbReference>
<dbReference type="InterPro" id="IPR031167">
    <property type="entry name" value="G_OBG"/>
</dbReference>
<dbReference type="InterPro" id="IPR006073">
    <property type="entry name" value="GTP-bd"/>
</dbReference>
<dbReference type="InterPro" id="IPR014100">
    <property type="entry name" value="GTP-bd_Obg/CgtA"/>
</dbReference>
<dbReference type="InterPro" id="IPR006074">
    <property type="entry name" value="GTP1-OBG_CS"/>
</dbReference>
<dbReference type="InterPro" id="IPR006169">
    <property type="entry name" value="GTP1_OBG_dom"/>
</dbReference>
<dbReference type="InterPro" id="IPR036726">
    <property type="entry name" value="GTP1_OBG_dom_sf"/>
</dbReference>
<dbReference type="InterPro" id="IPR045086">
    <property type="entry name" value="OBG_GTPase"/>
</dbReference>
<dbReference type="InterPro" id="IPR027417">
    <property type="entry name" value="P-loop_NTPase"/>
</dbReference>
<dbReference type="NCBIfam" id="TIGR02729">
    <property type="entry name" value="Obg_CgtA"/>
    <property type="match status" value="1"/>
</dbReference>
<dbReference type="NCBIfam" id="NF008955">
    <property type="entry name" value="PRK12297.1"/>
    <property type="match status" value="1"/>
</dbReference>
<dbReference type="NCBIfam" id="NF008956">
    <property type="entry name" value="PRK12299.1"/>
    <property type="match status" value="1"/>
</dbReference>
<dbReference type="PANTHER" id="PTHR11702">
    <property type="entry name" value="DEVELOPMENTALLY REGULATED GTP-BINDING PROTEIN-RELATED"/>
    <property type="match status" value="1"/>
</dbReference>
<dbReference type="PANTHER" id="PTHR11702:SF31">
    <property type="entry name" value="MITOCHONDRIAL RIBOSOME-ASSOCIATED GTPASE 2"/>
    <property type="match status" value="1"/>
</dbReference>
<dbReference type="Pfam" id="PF01018">
    <property type="entry name" value="GTP1_OBG"/>
    <property type="match status" value="1"/>
</dbReference>
<dbReference type="Pfam" id="PF01926">
    <property type="entry name" value="MMR_HSR1"/>
    <property type="match status" value="1"/>
</dbReference>
<dbReference type="PIRSF" id="PIRSF002401">
    <property type="entry name" value="GTP_bd_Obg/CgtA"/>
    <property type="match status" value="1"/>
</dbReference>
<dbReference type="PRINTS" id="PR00326">
    <property type="entry name" value="GTP1OBG"/>
</dbReference>
<dbReference type="SUPFAM" id="SSF82051">
    <property type="entry name" value="Obg GTP-binding protein N-terminal domain"/>
    <property type="match status" value="1"/>
</dbReference>
<dbReference type="SUPFAM" id="SSF52540">
    <property type="entry name" value="P-loop containing nucleoside triphosphate hydrolases"/>
    <property type="match status" value="1"/>
</dbReference>
<dbReference type="PROSITE" id="PS51710">
    <property type="entry name" value="G_OBG"/>
    <property type="match status" value="1"/>
</dbReference>
<dbReference type="PROSITE" id="PS00905">
    <property type="entry name" value="GTP1_OBG"/>
    <property type="match status" value="1"/>
</dbReference>
<dbReference type="PROSITE" id="PS51883">
    <property type="entry name" value="OBG"/>
    <property type="match status" value="1"/>
</dbReference>
<name>OBG_VIBCH</name>
<reference key="1">
    <citation type="journal article" date="2000" name="Nature">
        <title>DNA sequence of both chromosomes of the cholera pathogen Vibrio cholerae.</title>
        <authorList>
            <person name="Heidelberg J.F."/>
            <person name="Eisen J.A."/>
            <person name="Nelson W.C."/>
            <person name="Clayton R.A."/>
            <person name="Gwinn M.L."/>
            <person name="Dodson R.J."/>
            <person name="Haft D.H."/>
            <person name="Hickey E.K."/>
            <person name="Peterson J.D."/>
            <person name="Umayam L.A."/>
            <person name="Gill S.R."/>
            <person name="Nelson K.E."/>
            <person name="Read T.D."/>
            <person name="Tettelin H."/>
            <person name="Richardson D.L."/>
            <person name="Ermolaeva M.D."/>
            <person name="Vamathevan J.J."/>
            <person name="Bass S."/>
            <person name="Qin H."/>
            <person name="Dragoi I."/>
            <person name="Sellers P."/>
            <person name="McDonald L.A."/>
            <person name="Utterback T.R."/>
            <person name="Fleischmann R.D."/>
            <person name="Nierman W.C."/>
            <person name="White O."/>
            <person name="Salzberg S.L."/>
            <person name="Smith H.O."/>
            <person name="Colwell R.R."/>
            <person name="Mekalanos J.J."/>
            <person name="Venter J.C."/>
            <person name="Fraser C.M."/>
        </authorList>
    </citation>
    <scope>NUCLEOTIDE SEQUENCE [LARGE SCALE GENOMIC DNA]</scope>
    <source>
        <strain>ATCC 39315 / El Tor Inaba N16961</strain>
    </source>
</reference>
<reference key="2">
    <citation type="journal article" date="2007" name="Proc. Natl. Acad. Sci. U.S.A.">
        <title>Regulation of the stringent response is the essential function of the conserved bacterial G protein CgtA in Vibrio cholerae.</title>
        <authorList>
            <person name="Raskin D.M."/>
            <person name="Judson N."/>
            <person name="Mekalanos J.J."/>
        </authorList>
    </citation>
    <scope>SUBUNIT</scope>
    <scope>INTERACTION WITH SPOT</scope>
    <scope>DISRUPTION PHENOTYPE</scope>
    <source>
        <strain>ATCC 39315 / El Tor Inaba N16961</strain>
    </source>
</reference>
<reference key="3">
    <citation type="journal article" date="2008" name="J. Bacteriol.">
        <title>Functional analysis of the essential GTP-binding-protein-coding gene cgtA of Vibrio cholerae.</title>
        <authorList>
            <person name="Shah S."/>
            <person name="Das B."/>
            <person name="Bhadra R.K."/>
        </authorList>
    </citation>
    <scope>C-TERMINAL DELETIONS</scope>
    <scope>OVEREXPRESSION</scope>
    <scope>DISRUPTION PHENOTYPE</scope>
    <source>
        <strain>ATCC 39315 / El Tor Inaba N16961</strain>
    </source>
</reference>
<reference key="4">
    <citation type="journal article" date="2015" name="Biochem. Biophys. Res. Commun.">
        <title>Two conserved amino acids of juxtaposed domains of a ribosomal maturation protein CgtA sustain its optimal GTPase activity.</title>
        <authorList>
            <person name="Chatterjee A."/>
            <person name="Datta P.P."/>
        </authorList>
    </citation>
    <scope>FUNCTION AS A GTPASE</scope>
    <scope>MUTAGENESIS OF GLY-93 AND TYR-189</scope>
    <source>
        <strain>ATCC 39315 / El Tor Inaba N16961</strain>
    </source>
</reference>